<dbReference type="EMBL" id="AE006914">
    <property type="protein sequence ID" value="AAL02716.1"/>
    <property type="molecule type" value="Genomic_DNA"/>
</dbReference>
<dbReference type="PIR" id="B97722">
    <property type="entry name" value="B97722"/>
</dbReference>
<dbReference type="RefSeq" id="WP_010976849.1">
    <property type="nucleotide sequence ID" value="NC_003103.1"/>
</dbReference>
<dbReference type="SMR" id="Q92J89"/>
<dbReference type="GeneID" id="928013"/>
<dbReference type="KEGG" id="rco:RC0178"/>
<dbReference type="HOGENOM" id="CLU_062853_0_0_5"/>
<dbReference type="Proteomes" id="UP000000816">
    <property type="component" value="Chromosome"/>
</dbReference>
<dbReference type="GO" id="GO:0015934">
    <property type="term" value="C:large ribosomal subunit"/>
    <property type="evidence" value="ECO:0007669"/>
    <property type="project" value="InterPro"/>
</dbReference>
<dbReference type="GO" id="GO:0019843">
    <property type="term" value="F:rRNA binding"/>
    <property type="evidence" value="ECO:0007669"/>
    <property type="project" value="UniProtKB-UniRule"/>
</dbReference>
<dbReference type="GO" id="GO:0003735">
    <property type="term" value="F:structural constituent of ribosome"/>
    <property type="evidence" value="ECO:0007669"/>
    <property type="project" value="InterPro"/>
</dbReference>
<dbReference type="GO" id="GO:0000049">
    <property type="term" value="F:tRNA binding"/>
    <property type="evidence" value="ECO:0007669"/>
    <property type="project" value="UniProtKB-KW"/>
</dbReference>
<dbReference type="GO" id="GO:0006417">
    <property type="term" value="P:regulation of translation"/>
    <property type="evidence" value="ECO:0007669"/>
    <property type="project" value="UniProtKB-KW"/>
</dbReference>
<dbReference type="GO" id="GO:0006412">
    <property type="term" value="P:translation"/>
    <property type="evidence" value="ECO:0007669"/>
    <property type="project" value="UniProtKB-UniRule"/>
</dbReference>
<dbReference type="CDD" id="cd00403">
    <property type="entry name" value="Ribosomal_L1"/>
    <property type="match status" value="1"/>
</dbReference>
<dbReference type="FunFam" id="3.40.50.790:FF:000001">
    <property type="entry name" value="50S ribosomal protein L1"/>
    <property type="match status" value="1"/>
</dbReference>
<dbReference type="Gene3D" id="3.30.190.20">
    <property type="match status" value="1"/>
</dbReference>
<dbReference type="Gene3D" id="3.40.50.790">
    <property type="match status" value="1"/>
</dbReference>
<dbReference type="HAMAP" id="MF_01318_B">
    <property type="entry name" value="Ribosomal_uL1_B"/>
    <property type="match status" value="1"/>
</dbReference>
<dbReference type="InterPro" id="IPR005878">
    <property type="entry name" value="Ribosom_uL1_bac-type"/>
</dbReference>
<dbReference type="InterPro" id="IPR002143">
    <property type="entry name" value="Ribosomal_uL1"/>
</dbReference>
<dbReference type="InterPro" id="IPR023674">
    <property type="entry name" value="Ribosomal_uL1-like"/>
</dbReference>
<dbReference type="InterPro" id="IPR028364">
    <property type="entry name" value="Ribosomal_uL1/biogenesis"/>
</dbReference>
<dbReference type="InterPro" id="IPR016095">
    <property type="entry name" value="Ribosomal_uL1_3-a/b-sand"/>
</dbReference>
<dbReference type="InterPro" id="IPR023673">
    <property type="entry name" value="Ribosomal_uL1_CS"/>
</dbReference>
<dbReference type="NCBIfam" id="TIGR01169">
    <property type="entry name" value="rplA_bact"/>
    <property type="match status" value="1"/>
</dbReference>
<dbReference type="PANTHER" id="PTHR36427">
    <property type="entry name" value="54S RIBOSOMAL PROTEIN L1, MITOCHONDRIAL"/>
    <property type="match status" value="1"/>
</dbReference>
<dbReference type="PANTHER" id="PTHR36427:SF3">
    <property type="entry name" value="LARGE RIBOSOMAL SUBUNIT PROTEIN UL1M"/>
    <property type="match status" value="1"/>
</dbReference>
<dbReference type="Pfam" id="PF00687">
    <property type="entry name" value="Ribosomal_L1"/>
    <property type="match status" value="1"/>
</dbReference>
<dbReference type="PIRSF" id="PIRSF002155">
    <property type="entry name" value="Ribosomal_L1"/>
    <property type="match status" value="1"/>
</dbReference>
<dbReference type="SUPFAM" id="SSF56808">
    <property type="entry name" value="Ribosomal protein L1"/>
    <property type="match status" value="1"/>
</dbReference>
<dbReference type="PROSITE" id="PS01199">
    <property type="entry name" value="RIBOSOMAL_L1"/>
    <property type="match status" value="1"/>
</dbReference>
<accession>Q92J89</accession>
<organism>
    <name type="scientific">Rickettsia conorii (strain ATCC VR-613 / Malish 7)</name>
    <dbReference type="NCBI Taxonomy" id="272944"/>
    <lineage>
        <taxon>Bacteria</taxon>
        <taxon>Pseudomonadati</taxon>
        <taxon>Pseudomonadota</taxon>
        <taxon>Alphaproteobacteria</taxon>
        <taxon>Rickettsiales</taxon>
        <taxon>Rickettsiaceae</taxon>
        <taxon>Rickettsieae</taxon>
        <taxon>Rickettsia</taxon>
        <taxon>spotted fever group</taxon>
    </lineage>
</organism>
<reference key="1">
    <citation type="journal article" date="2001" name="Science">
        <title>Mechanisms of evolution in Rickettsia conorii and R. prowazekii.</title>
        <authorList>
            <person name="Ogata H."/>
            <person name="Audic S."/>
            <person name="Renesto-Audiffren P."/>
            <person name="Fournier P.-E."/>
            <person name="Barbe V."/>
            <person name="Samson D."/>
            <person name="Roux V."/>
            <person name="Cossart P."/>
            <person name="Weissenbach J."/>
            <person name="Claverie J.-M."/>
            <person name="Raoult D."/>
        </authorList>
    </citation>
    <scope>NUCLEOTIDE SEQUENCE [LARGE SCALE GENOMIC DNA]</scope>
    <source>
        <strain>ATCC VR-613 / Malish 7</strain>
    </source>
</reference>
<feature type="chain" id="PRO_0000125722" description="Large ribosomal subunit protein uL1">
    <location>
        <begin position="1"/>
        <end position="239"/>
    </location>
</feature>
<proteinExistence type="inferred from homology"/>
<gene>
    <name evidence="1" type="primary">rplA</name>
    <name type="ordered locus">RC0178</name>
</gene>
<comment type="function">
    <text evidence="1">Binds directly to 23S rRNA. The L1 stalk is quite mobile in the ribosome, and is involved in E site tRNA release.</text>
</comment>
<comment type="function">
    <text evidence="1">Protein L1 is also a translational repressor protein, it controls the translation of the L11 operon by binding to its mRNA.</text>
</comment>
<comment type="subunit">
    <text evidence="1">Part of the 50S ribosomal subunit.</text>
</comment>
<comment type="similarity">
    <text evidence="1">Belongs to the universal ribosomal protein uL1 family.</text>
</comment>
<name>RL1_RICCN</name>
<sequence>MSNKKDVAVKISGGKKIREAREKVKSDTLYNLTNAVERLKSASYVKFDPTLEIVMKLGIDSRHSDQMVRGVVNLPAGTGKTVRVAVICKEEREEEAKSAGADLVGSTNIIDEIKAGKINFDVCIATPDMMAAIGSVARILGPKGLMPNPKLGTVTLDIKNAIKNAKSGQVEYRAEKAGIIHAGLGKLSFSDQDLLKNLNAFIEAVIKAKPAGLKGSYLKAMYLSSTMGASVQIDLTSIA</sequence>
<protein>
    <recommendedName>
        <fullName evidence="1">Large ribosomal subunit protein uL1</fullName>
    </recommendedName>
    <alternativeName>
        <fullName evidence="2">50S ribosomal protein L1</fullName>
    </alternativeName>
</protein>
<evidence type="ECO:0000255" key="1">
    <source>
        <dbReference type="HAMAP-Rule" id="MF_01318"/>
    </source>
</evidence>
<evidence type="ECO:0000305" key="2"/>
<keyword id="KW-0678">Repressor</keyword>
<keyword id="KW-0687">Ribonucleoprotein</keyword>
<keyword id="KW-0689">Ribosomal protein</keyword>
<keyword id="KW-0694">RNA-binding</keyword>
<keyword id="KW-0699">rRNA-binding</keyword>
<keyword id="KW-0810">Translation regulation</keyword>
<keyword id="KW-0820">tRNA-binding</keyword>